<reference key="1">
    <citation type="journal article" date="2004" name="J. Bacteriol.">
        <title>Comparative genomics of two Leptospira interrogans serovars reveals novel insights into physiology and pathogenesis.</title>
        <authorList>
            <person name="Nascimento A.L.T.O."/>
            <person name="Ko A.I."/>
            <person name="Martins E.A.L."/>
            <person name="Monteiro-Vitorello C.B."/>
            <person name="Ho P.L."/>
            <person name="Haake D.A."/>
            <person name="Verjovski-Almeida S."/>
            <person name="Hartskeerl R.A."/>
            <person name="Marques M.V."/>
            <person name="Oliveira M.C."/>
            <person name="Menck C.F.M."/>
            <person name="Leite L.C.C."/>
            <person name="Carrer H."/>
            <person name="Coutinho L.L."/>
            <person name="Degrave W.M."/>
            <person name="Dellagostin O.A."/>
            <person name="El-Dorry H."/>
            <person name="Ferro E.S."/>
            <person name="Ferro M.I.T."/>
            <person name="Furlan L.R."/>
            <person name="Gamberini M."/>
            <person name="Giglioti E.A."/>
            <person name="Goes-Neto A."/>
            <person name="Goldman G.H."/>
            <person name="Goldman M.H.S."/>
            <person name="Harakava R."/>
            <person name="Jeronimo S.M.B."/>
            <person name="Junqueira-de-Azevedo I.L.M."/>
            <person name="Kimura E.T."/>
            <person name="Kuramae E.E."/>
            <person name="Lemos E.G.M."/>
            <person name="Lemos M.V.F."/>
            <person name="Marino C.L."/>
            <person name="Nunes L.R."/>
            <person name="de Oliveira R.C."/>
            <person name="Pereira G.G."/>
            <person name="Reis M.S."/>
            <person name="Schriefer A."/>
            <person name="Siqueira W.J."/>
            <person name="Sommer P."/>
            <person name="Tsai S.M."/>
            <person name="Simpson A.J.G."/>
            <person name="Ferro J.A."/>
            <person name="Camargo L.E.A."/>
            <person name="Kitajima J.P."/>
            <person name="Setubal J.C."/>
            <person name="Van Sluys M.A."/>
        </authorList>
    </citation>
    <scope>NUCLEOTIDE SEQUENCE [LARGE SCALE GENOMIC DNA]</scope>
    <source>
        <strain>Fiocruz L1-130</strain>
    </source>
</reference>
<keyword id="KW-0067">ATP-binding</keyword>
<keyword id="KW-0131">Cell cycle</keyword>
<keyword id="KW-0132">Cell division</keyword>
<keyword id="KW-0133">Cell shape</keyword>
<keyword id="KW-0961">Cell wall biogenesis/degradation</keyword>
<keyword id="KW-0963">Cytoplasm</keyword>
<keyword id="KW-0436">Ligase</keyword>
<keyword id="KW-0547">Nucleotide-binding</keyword>
<keyword id="KW-0573">Peptidoglycan synthesis</keyword>
<dbReference type="EC" id="6.3.2.9" evidence="1"/>
<dbReference type="EMBL" id="AE016823">
    <property type="protein sequence ID" value="AAS71342.1"/>
    <property type="molecule type" value="Genomic_DNA"/>
</dbReference>
<dbReference type="RefSeq" id="WP_000671558.1">
    <property type="nucleotide sequence ID" value="NC_005823.1"/>
</dbReference>
<dbReference type="SMR" id="Q72NP4"/>
<dbReference type="GeneID" id="61142664"/>
<dbReference type="KEGG" id="lic:LIC_12788"/>
<dbReference type="HOGENOM" id="CLU_032540_1_0_12"/>
<dbReference type="UniPathway" id="UPA00219"/>
<dbReference type="Proteomes" id="UP000007037">
    <property type="component" value="Chromosome I"/>
</dbReference>
<dbReference type="GO" id="GO:0005737">
    <property type="term" value="C:cytoplasm"/>
    <property type="evidence" value="ECO:0007669"/>
    <property type="project" value="UniProtKB-SubCell"/>
</dbReference>
<dbReference type="GO" id="GO:0005524">
    <property type="term" value="F:ATP binding"/>
    <property type="evidence" value="ECO:0007669"/>
    <property type="project" value="UniProtKB-UniRule"/>
</dbReference>
<dbReference type="GO" id="GO:0008764">
    <property type="term" value="F:UDP-N-acetylmuramoylalanine-D-glutamate ligase activity"/>
    <property type="evidence" value="ECO:0007669"/>
    <property type="project" value="UniProtKB-UniRule"/>
</dbReference>
<dbReference type="GO" id="GO:0051301">
    <property type="term" value="P:cell division"/>
    <property type="evidence" value="ECO:0007669"/>
    <property type="project" value="UniProtKB-KW"/>
</dbReference>
<dbReference type="GO" id="GO:0071555">
    <property type="term" value="P:cell wall organization"/>
    <property type="evidence" value="ECO:0007669"/>
    <property type="project" value="UniProtKB-KW"/>
</dbReference>
<dbReference type="GO" id="GO:0009252">
    <property type="term" value="P:peptidoglycan biosynthetic process"/>
    <property type="evidence" value="ECO:0007669"/>
    <property type="project" value="UniProtKB-UniRule"/>
</dbReference>
<dbReference type="GO" id="GO:0008360">
    <property type="term" value="P:regulation of cell shape"/>
    <property type="evidence" value="ECO:0007669"/>
    <property type="project" value="UniProtKB-KW"/>
</dbReference>
<dbReference type="Gene3D" id="3.90.190.20">
    <property type="entry name" value="Mur ligase, C-terminal domain"/>
    <property type="match status" value="1"/>
</dbReference>
<dbReference type="Gene3D" id="3.40.1190.10">
    <property type="entry name" value="Mur-like, catalytic domain"/>
    <property type="match status" value="1"/>
</dbReference>
<dbReference type="Gene3D" id="3.40.50.720">
    <property type="entry name" value="NAD(P)-binding Rossmann-like Domain"/>
    <property type="match status" value="1"/>
</dbReference>
<dbReference type="HAMAP" id="MF_00639">
    <property type="entry name" value="MurD"/>
    <property type="match status" value="1"/>
</dbReference>
<dbReference type="InterPro" id="IPR036565">
    <property type="entry name" value="Mur-like_cat_sf"/>
</dbReference>
<dbReference type="InterPro" id="IPR036615">
    <property type="entry name" value="Mur_ligase_C_dom_sf"/>
</dbReference>
<dbReference type="InterPro" id="IPR013221">
    <property type="entry name" value="Mur_ligase_cen"/>
</dbReference>
<dbReference type="InterPro" id="IPR005762">
    <property type="entry name" value="MurD"/>
</dbReference>
<dbReference type="NCBIfam" id="TIGR01087">
    <property type="entry name" value="murD"/>
    <property type="match status" value="1"/>
</dbReference>
<dbReference type="PANTHER" id="PTHR43692">
    <property type="entry name" value="UDP-N-ACETYLMURAMOYLALANINE--D-GLUTAMATE LIGASE"/>
    <property type="match status" value="1"/>
</dbReference>
<dbReference type="PANTHER" id="PTHR43692:SF1">
    <property type="entry name" value="UDP-N-ACETYLMURAMOYLALANINE--D-GLUTAMATE LIGASE"/>
    <property type="match status" value="1"/>
</dbReference>
<dbReference type="Pfam" id="PF08245">
    <property type="entry name" value="Mur_ligase_M"/>
    <property type="match status" value="1"/>
</dbReference>
<dbReference type="Pfam" id="PF21799">
    <property type="entry name" value="MurD-like_N"/>
    <property type="match status" value="1"/>
</dbReference>
<dbReference type="SUPFAM" id="SSF51984">
    <property type="entry name" value="MurCD N-terminal domain"/>
    <property type="match status" value="1"/>
</dbReference>
<dbReference type="SUPFAM" id="SSF53623">
    <property type="entry name" value="MurD-like peptide ligases, catalytic domain"/>
    <property type="match status" value="1"/>
</dbReference>
<dbReference type="SUPFAM" id="SSF53244">
    <property type="entry name" value="MurD-like peptide ligases, peptide-binding domain"/>
    <property type="match status" value="1"/>
</dbReference>
<sequence>MKFPESLKGLKILVLGGGISGNSALNFLISEKAQPILCDRNQPERTVVPFFPDNIPPQSLPEVSLVIKSPGILPTHPILSYAADKKIPVVSEIDLGRYFFKGKIIGITGTDGKSTTTSLIAHLLKESFPDLKEGGNLGIPFTSFCKESISLAVLELSSYQLEDSSPLHLDVSVFLNLASDHLERHKTMENYFQAKLKIADLSNSNHTLIVSEKIKERILNSISYQCKLLSFGKTSDSNAFLDENSLKIKTSKFVYDISKFYLPGTHNRENLAASILAAEEIGGKPESIQTRIPLFRGLPHRFQIAGEKLGISFINDSKSTNLHSMLAGMATWKNIDQTCLILGGRPKQEDLKPLYNFLIKGIGCVVLFGEARATWESGIKNIIGEKLYCVENLNDTFEIFKKGNIFPVPGLNKDIIIRLSDSISISSFVFSPACASFDQYKNFEERGNHFLSLVNDFLDQIDS</sequence>
<protein>
    <recommendedName>
        <fullName evidence="1">UDP-N-acetylmuramoylalanine--D-glutamate ligase</fullName>
        <ecNumber evidence="1">6.3.2.9</ecNumber>
    </recommendedName>
    <alternativeName>
        <fullName evidence="1">D-glutamic acid-adding enzyme</fullName>
    </alternativeName>
    <alternativeName>
        <fullName evidence="1">UDP-N-acetylmuramoyl-L-alanyl-D-glutamate synthetase</fullName>
    </alternativeName>
</protein>
<organism>
    <name type="scientific">Leptospira interrogans serogroup Icterohaemorrhagiae serovar copenhageni (strain Fiocruz L1-130)</name>
    <dbReference type="NCBI Taxonomy" id="267671"/>
    <lineage>
        <taxon>Bacteria</taxon>
        <taxon>Pseudomonadati</taxon>
        <taxon>Spirochaetota</taxon>
        <taxon>Spirochaetia</taxon>
        <taxon>Leptospirales</taxon>
        <taxon>Leptospiraceae</taxon>
        <taxon>Leptospira</taxon>
    </lineage>
</organism>
<feature type="chain" id="PRO_0000109037" description="UDP-N-acetylmuramoylalanine--D-glutamate ligase">
    <location>
        <begin position="1"/>
        <end position="463"/>
    </location>
</feature>
<feature type="binding site" evidence="1">
    <location>
        <begin position="109"/>
        <end position="115"/>
    </location>
    <ligand>
        <name>ATP</name>
        <dbReference type="ChEBI" id="CHEBI:30616"/>
    </ligand>
</feature>
<proteinExistence type="inferred from homology"/>
<name>MURD_LEPIC</name>
<gene>
    <name evidence="1" type="primary">murD</name>
    <name type="ordered locus">LIC_12788</name>
</gene>
<accession>Q72NP4</accession>
<comment type="function">
    <text evidence="1">Cell wall formation. Catalyzes the addition of glutamate to the nucleotide precursor UDP-N-acetylmuramoyl-L-alanine (UMA).</text>
</comment>
<comment type="catalytic activity">
    <reaction evidence="1">
        <text>UDP-N-acetyl-alpha-D-muramoyl-L-alanine + D-glutamate + ATP = UDP-N-acetyl-alpha-D-muramoyl-L-alanyl-D-glutamate + ADP + phosphate + H(+)</text>
        <dbReference type="Rhea" id="RHEA:16429"/>
        <dbReference type="ChEBI" id="CHEBI:15378"/>
        <dbReference type="ChEBI" id="CHEBI:29986"/>
        <dbReference type="ChEBI" id="CHEBI:30616"/>
        <dbReference type="ChEBI" id="CHEBI:43474"/>
        <dbReference type="ChEBI" id="CHEBI:83898"/>
        <dbReference type="ChEBI" id="CHEBI:83900"/>
        <dbReference type="ChEBI" id="CHEBI:456216"/>
        <dbReference type="EC" id="6.3.2.9"/>
    </reaction>
</comment>
<comment type="pathway">
    <text evidence="1">Cell wall biogenesis; peptidoglycan biosynthesis.</text>
</comment>
<comment type="subcellular location">
    <subcellularLocation>
        <location evidence="1">Cytoplasm</location>
    </subcellularLocation>
</comment>
<comment type="similarity">
    <text evidence="1">Belongs to the MurCDEF family.</text>
</comment>
<evidence type="ECO:0000255" key="1">
    <source>
        <dbReference type="HAMAP-Rule" id="MF_00639"/>
    </source>
</evidence>